<proteinExistence type="evidence at transcript level"/>
<dbReference type="EC" id="2.5.1.6" evidence="5"/>
<dbReference type="EMBL" id="M61882">
    <property type="protein sequence ID" value="AAA33274.1"/>
    <property type="molecule type" value="mRNA"/>
</dbReference>
<dbReference type="PIR" id="T10710">
    <property type="entry name" value="T10710"/>
</dbReference>
<dbReference type="SMR" id="P24260"/>
<dbReference type="UniPathway" id="UPA00315">
    <property type="reaction ID" value="UER00080"/>
</dbReference>
<dbReference type="GO" id="GO:0005737">
    <property type="term" value="C:cytoplasm"/>
    <property type="evidence" value="ECO:0007669"/>
    <property type="project" value="UniProtKB-SubCell"/>
</dbReference>
<dbReference type="GO" id="GO:0005524">
    <property type="term" value="F:ATP binding"/>
    <property type="evidence" value="ECO:0007669"/>
    <property type="project" value="UniProtKB-KW"/>
</dbReference>
<dbReference type="GO" id="GO:0046872">
    <property type="term" value="F:metal ion binding"/>
    <property type="evidence" value="ECO:0007669"/>
    <property type="project" value="UniProtKB-KW"/>
</dbReference>
<dbReference type="GO" id="GO:0004478">
    <property type="term" value="F:methionine adenosyltransferase activity"/>
    <property type="evidence" value="ECO:0007669"/>
    <property type="project" value="UniProtKB-EC"/>
</dbReference>
<dbReference type="GO" id="GO:0006730">
    <property type="term" value="P:one-carbon metabolic process"/>
    <property type="evidence" value="ECO:0007669"/>
    <property type="project" value="UniProtKB-KW"/>
</dbReference>
<dbReference type="GO" id="GO:0006556">
    <property type="term" value="P:S-adenosylmethionine biosynthetic process"/>
    <property type="evidence" value="ECO:0007669"/>
    <property type="project" value="UniProtKB-UniPathway"/>
</dbReference>
<dbReference type="CDD" id="cd18079">
    <property type="entry name" value="S-AdoMet_synt"/>
    <property type="match status" value="1"/>
</dbReference>
<dbReference type="FunFam" id="3.30.300.10:FF:000001">
    <property type="entry name" value="S-adenosylmethionine synthase"/>
    <property type="match status" value="1"/>
</dbReference>
<dbReference type="FunFam" id="3.30.300.10:FF:000003">
    <property type="entry name" value="S-adenosylmethionine synthase"/>
    <property type="match status" value="1"/>
</dbReference>
<dbReference type="FunFam" id="3.30.300.10:FF:000004">
    <property type="entry name" value="S-adenosylmethionine synthase"/>
    <property type="match status" value="1"/>
</dbReference>
<dbReference type="Gene3D" id="3.30.300.10">
    <property type="match status" value="3"/>
</dbReference>
<dbReference type="HAMAP" id="MF_00086">
    <property type="entry name" value="S_AdoMet_synth1"/>
    <property type="match status" value="1"/>
</dbReference>
<dbReference type="InterPro" id="IPR022631">
    <property type="entry name" value="ADOMET_SYNTHASE_CS"/>
</dbReference>
<dbReference type="InterPro" id="IPR022630">
    <property type="entry name" value="S-AdoMet_synt_C"/>
</dbReference>
<dbReference type="InterPro" id="IPR022629">
    <property type="entry name" value="S-AdoMet_synt_central"/>
</dbReference>
<dbReference type="InterPro" id="IPR022628">
    <property type="entry name" value="S-AdoMet_synt_N"/>
</dbReference>
<dbReference type="InterPro" id="IPR002133">
    <property type="entry name" value="S-AdoMet_synthetase"/>
</dbReference>
<dbReference type="InterPro" id="IPR022636">
    <property type="entry name" value="S-AdoMet_synthetase_sfam"/>
</dbReference>
<dbReference type="NCBIfam" id="TIGR01034">
    <property type="entry name" value="metK"/>
    <property type="match status" value="1"/>
</dbReference>
<dbReference type="PANTHER" id="PTHR11964">
    <property type="entry name" value="S-ADENOSYLMETHIONINE SYNTHETASE"/>
    <property type="match status" value="1"/>
</dbReference>
<dbReference type="Pfam" id="PF02773">
    <property type="entry name" value="S-AdoMet_synt_C"/>
    <property type="match status" value="1"/>
</dbReference>
<dbReference type="Pfam" id="PF02772">
    <property type="entry name" value="S-AdoMet_synt_M"/>
    <property type="match status" value="1"/>
</dbReference>
<dbReference type="Pfam" id="PF00438">
    <property type="entry name" value="S-AdoMet_synt_N"/>
    <property type="match status" value="1"/>
</dbReference>
<dbReference type="PIRSF" id="PIRSF000497">
    <property type="entry name" value="MAT"/>
    <property type="match status" value="1"/>
</dbReference>
<dbReference type="SUPFAM" id="SSF55973">
    <property type="entry name" value="S-adenosylmethionine synthetase"/>
    <property type="match status" value="3"/>
</dbReference>
<dbReference type="PROSITE" id="PS00376">
    <property type="entry name" value="ADOMET_SYNTHASE_1"/>
    <property type="match status" value="1"/>
</dbReference>
<dbReference type="PROSITE" id="PS00377">
    <property type="entry name" value="ADOMET_SYNTHASE_2"/>
    <property type="match status" value="1"/>
</dbReference>
<reference key="1">
    <citation type="journal article" date="1991" name="Plant Physiol.">
        <title>Cloning and nucleotide sequence of a S-adenosylmethionine synthetase cDNA clone from carnation.</title>
        <authorList>
            <person name="Larsen P.B."/>
            <person name="Woodson W.R."/>
        </authorList>
    </citation>
    <scope>NUCLEOTIDE SEQUENCE [MRNA]</scope>
</reference>
<protein>
    <recommendedName>
        <fullName>S-adenosylmethionine synthase 2</fullName>
        <shortName>AdoMet synthase 2</shortName>
        <ecNumber evidence="5">2.5.1.6</ecNumber>
    </recommendedName>
    <alternativeName>
        <fullName>Methionine adenosyltransferase 2</fullName>
        <shortName>MAT 2</shortName>
    </alternativeName>
</protein>
<evidence type="ECO:0000250" key="1"/>
<evidence type="ECO:0000250" key="2">
    <source>
        <dbReference type="UniProtKB" id="P0A817"/>
    </source>
</evidence>
<evidence type="ECO:0000250" key="3">
    <source>
        <dbReference type="UniProtKB" id="P13444"/>
    </source>
</evidence>
<evidence type="ECO:0000250" key="4">
    <source>
        <dbReference type="UniProtKB" id="Q00266"/>
    </source>
</evidence>
<evidence type="ECO:0000250" key="5">
    <source>
        <dbReference type="UniProtKB" id="Q96551"/>
    </source>
</evidence>
<evidence type="ECO:0000305" key="6"/>
<gene>
    <name type="primary">SAM2</name>
</gene>
<organism>
    <name type="scientific">Dianthus caryophyllus</name>
    <name type="common">Carnation</name>
    <name type="synonym">Clove pink</name>
    <dbReference type="NCBI Taxonomy" id="3570"/>
    <lineage>
        <taxon>Eukaryota</taxon>
        <taxon>Viridiplantae</taxon>
        <taxon>Streptophyta</taxon>
        <taxon>Embryophyta</taxon>
        <taxon>Tracheophyta</taxon>
        <taxon>Spermatophyta</taxon>
        <taxon>Magnoliopsida</taxon>
        <taxon>eudicotyledons</taxon>
        <taxon>Gunneridae</taxon>
        <taxon>Pentapetalae</taxon>
        <taxon>Caryophyllales</taxon>
        <taxon>Caryophyllaceae</taxon>
        <taxon>Caryophylleae</taxon>
        <taxon>Dianthus</taxon>
    </lineage>
</organism>
<accession>P24260</accession>
<comment type="function">
    <text evidence="5">Catalyzes the formation of S-adenosylmethionine from methionine and ATP. The reaction comprises two steps that are both catalyzed by the same enzyme: formation of S-adenosylmethionine (AdoMet) and triphosphate, and subsequent hydrolysis of the triphosphate.</text>
</comment>
<comment type="catalytic activity">
    <reaction evidence="5">
        <text>L-methionine + ATP + H2O = S-adenosyl-L-methionine + phosphate + diphosphate</text>
        <dbReference type="Rhea" id="RHEA:21080"/>
        <dbReference type="ChEBI" id="CHEBI:15377"/>
        <dbReference type="ChEBI" id="CHEBI:30616"/>
        <dbReference type="ChEBI" id="CHEBI:33019"/>
        <dbReference type="ChEBI" id="CHEBI:43474"/>
        <dbReference type="ChEBI" id="CHEBI:57844"/>
        <dbReference type="ChEBI" id="CHEBI:59789"/>
        <dbReference type="EC" id="2.5.1.6"/>
    </reaction>
</comment>
<comment type="cofactor">
    <cofactor evidence="5">
        <name>Mn(2+)</name>
        <dbReference type="ChEBI" id="CHEBI:29035"/>
    </cofactor>
    <cofactor evidence="5">
        <name>Mg(2+)</name>
        <dbReference type="ChEBI" id="CHEBI:18420"/>
    </cofactor>
    <cofactor evidence="5">
        <name>Co(2+)</name>
        <dbReference type="ChEBI" id="CHEBI:48828"/>
    </cofactor>
    <text evidence="3 5">Binds 2 divalent ions per subunit. The metal ions interact primarily with the substrate (By similarity). Can utilize magnesium, manganese or cobalt (in vitro) (By similarity).</text>
</comment>
<comment type="cofactor">
    <cofactor evidence="5">
        <name>K(+)</name>
        <dbReference type="ChEBI" id="CHEBI:29103"/>
    </cofactor>
    <text evidence="3">Binds 1 potassium ion per subunit. The potassium ion interacts primarily with the substrate (By similarity).</text>
</comment>
<comment type="pathway">
    <text evidence="5">Amino-acid biosynthesis; S-adenosyl-L-methionine biosynthesis; S-adenosyl-L-methionine from L-methionine: step 1/1.</text>
</comment>
<comment type="subunit">
    <text evidence="1">Homotetramer.</text>
</comment>
<comment type="subcellular location">
    <subcellularLocation>
        <location evidence="1">Cytoplasm</location>
    </subcellularLocation>
</comment>
<comment type="similarity">
    <text evidence="6">Belongs to the AdoMet synthase family.</text>
</comment>
<name>METK2_DIACA</name>
<sequence length="396" mass="43189">MAAAADTFLFTSESVNEGHPDKLCDQISDAVLDACLAQDAESKVACETCTKTNLVMVFGEITTKANVDYEKIVADTCREIGFVSPDVGLDADNCKVLVYIEQQSPDIAQGVHGHLTKRPEDIGAGDQGHMFGYATDETPELMPLSHVLATKLGARLTEVRKNGTCAWLRPDGKTQVTVEYYNENGAMVPIRVHTVLISTQHDETVTNDEIAADLKEHVIKPVIPEKYLDENTIFHLNPSGRFVIGGPHGDAGLTGRKIIIDTYGGWGAHGGGAFSRKDPTKVDRSGAYIARQAAKSIVASGLARRCIVQISYAIGVPEPLSVFVDTYGTGKIHDREILKIVKENFDFRPGMIAIALDLKKGGNRYLKTAAYGHFGREDPDFTWEAAKTLKWEKPQA</sequence>
<keyword id="KW-0067">ATP-binding</keyword>
<keyword id="KW-0170">Cobalt</keyword>
<keyword id="KW-0963">Cytoplasm</keyword>
<keyword id="KW-0460">Magnesium</keyword>
<keyword id="KW-0479">Metal-binding</keyword>
<keyword id="KW-0547">Nucleotide-binding</keyword>
<keyword id="KW-0554">One-carbon metabolism</keyword>
<keyword id="KW-0630">Potassium</keyword>
<keyword id="KW-0808">Transferase</keyword>
<feature type="chain" id="PRO_0000174462" description="S-adenosylmethionine synthase 2">
    <location>
        <begin position="1"/>
        <end position="396"/>
    </location>
</feature>
<feature type="binding site" evidence="3">
    <location>
        <position position="13"/>
    </location>
    <ligand>
        <name>Mg(2+)</name>
        <dbReference type="ChEBI" id="CHEBI:18420"/>
    </ligand>
</feature>
<feature type="binding site" description="in other chain" evidence="4">
    <location>
        <position position="19"/>
    </location>
    <ligand>
        <name>ATP</name>
        <dbReference type="ChEBI" id="CHEBI:30616"/>
        <note>ligand shared between two neighboring subunits</note>
    </ligand>
</feature>
<feature type="binding site" evidence="2">
    <location>
        <position position="47"/>
    </location>
    <ligand>
        <name>K(+)</name>
        <dbReference type="ChEBI" id="CHEBI:29103"/>
    </ligand>
</feature>
<feature type="binding site" description="in other chain" evidence="2">
    <location>
        <position position="60"/>
    </location>
    <ligand>
        <name>L-methionine</name>
        <dbReference type="ChEBI" id="CHEBI:57844"/>
        <note>ligand shared between two neighboring subunits</note>
    </ligand>
</feature>
<feature type="binding site" description="in other chain" evidence="2">
    <location>
        <position position="103"/>
    </location>
    <ligand>
        <name>L-methionine</name>
        <dbReference type="ChEBI" id="CHEBI:57844"/>
        <note>ligand shared between two neighboring subunits</note>
    </ligand>
</feature>
<feature type="binding site" description="in other chain" evidence="4">
    <location>
        <begin position="171"/>
        <end position="173"/>
    </location>
    <ligand>
        <name>ATP</name>
        <dbReference type="ChEBI" id="CHEBI:30616"/>
        <note>ligand shared between two neighboring subunits</note>
    </ligand>
</feature>
<feature type="binding site" description="in other chain" evidence="4">
    <location>
        <begin position="239"/>
        <end position="242"/>
    </location>
    <ligand>
        <name>ATP</name>
        <dbReference type="ChEBI" id="CHEBI:30616"/>
        <note>ligand shared between two neighboring subunits</note>
    </ligand>
</feature>
<feature type="binding site" description="in other chain" evidence="4">
    <location>
        <position position="250"/>
    </location>
    <ligand>
        <name>ATP</name>
        <dbReference type="ChEBI" id="CHEBI:30616"/>
        <note>ligand shared between two neighboring subunits</note>
    </ligand>
</feature>
<feature type="binding site" evidence="2">
    <location>
        <position position="250"/>
    </location>
    <ligand>
        <name>L-methionine</name>
        <dbReference type="ChEBI" id="CHEBI:57844"/>
        <note>ligand shared between two neighboring subunits</note>
    </ligand>
</feature>
<feature type="binding site" description="in other chain" evidence="2">
    <location>
        <begin position="256"/>
        <end position="257"/>
    </location>
    <ligand>
        <name>ATP</name>
        <dbReference type="ChEBI" id="CHEBI:30616"/>
        <note>ligand shared between two neighboring subunits</note>
    </ligand>
</feature>
<feature type="binding site" evidence="2">
    <location>
        <position position="273"/>
    </location>
    <ligand>
        <name>ATP</name>
        <dbReference type="ChEBI" id="CHEBI:30616"/>
        <note>ligand shared between two neighboring subunits</note>
    </ligand>
</feature>
<feature type="binding site" evidence="2">
    <location>
        <position position="277"/>
    </location>
    <ligand>
        <name>ATP</name>
        <dbReference type="ChEBI" id="CHEBI:30616"/>
        <note>ligand shared between two neighboring subunits</note>
    </ligand>
</feature>
<feature type="binding site" evidence="3">
    <location>
        <position position="281"/>
    </location>
    <ligand>
        <name>ATP</name>
        <dbReference type="ChEBI" id="CHEBI:30616"/>
        <note>ligand shared between two neighboring subunits</note>
    </ligand>
</feature>
<feature type="binding site" description="in other chain" evidence="2">
    <location>
        <position position="281"/>
    </location>
    <ligand>
        <name>L-methionine</name>
        <dbReference type="ChEBI" id="CHEBI:57844"/>
        <note>ligand shared between two neighboring subunits</note>
    </ligand>
</feature>